<reference key="1">
    <citation type="journal article" date="2007" name="PLoS Genet.">
        <title>Patterns and implications of gene gain and loss in the evolution of Prochlorococcus.</title>
        <authorList>
            <person name="Kettler G.C."/>
            <person name="Martiny A.C."/>
            <person name="Huang K."/>
            <person name="Zucker J."/>
            <person name="Coleman M.L."/>
            <person name="Rodrigue S."/>
            <person name="Chen F."/>
            <person name="Lapidus A."/>
            <person name="Ferriera S."/>
            <person name="Johnson J."/>
            <person name="Steglich C."/>
            <person name="Church G.M."/>
            <person name="Richardson P."/>
            <person name="Chisholm S.W."/>
        </authorList>
    </citation>
    <scope>NUCLEOTIDE SEQUENCE [LARGE SCALE GENOMIC DNA]</scope>
    <source>
        <strain>NATL2A</strain>
    </source>
</reference>
<gene>
    <name type="ordered locus">PMN2A_0775</name>
</gene>
<dbReference type="EC" id="1.14.11.-" evidence="1"/>
<dbReference type="EMBL" id="CP000095">
    <property type="protein sequence ID" value="AAZ58266.1"/>
    <property type="molecule type" value="Genomic_DNA"/>
</dbReference>
<dbReference type="RefSeq" id="WP_011294863.1">
    <property type="nucleotide sequence ID" value="NC_007335.2"/>
</dbReference>
<dbReference type="SMR" id="Q46JR2"/>
<dbReference type="STRING" id="59920.PMN2A_0775"/>
<dbReference type="DNASU" id="3606154"/>
<dbReference type="KEGG" id="pmn:PMN2A_0775"/>
<dbReference type="HOGENOM" id="CLU_106663_0_0_3"/>
<dbReference type="OrthoDB" id="9812472at2"/>
<dbReference type="PhylomeDB" id="Q46JR2"/>
<dbReference type="Proteomes" id="UP000002535">
    <property type="component" value="Chromosome"/>
</dbReference>
<dbReference type="GO" id="GO:0016706">
    <property type="term" value="F:2-oxoglutarate-dependent dioxygenase activity"/>
    <property type="evidence" value="ECO:0007669"/>
    <property type="project" value="UniProtKB-UniRule"/>
</dbReference>
<dbReference type="GO" id="GO:0005506">
    <property type="term" value="F:iron ion binding"/>
    <property type="evidence" value="ECO:0007669"/>
    <property type="project" value="UniProtKB-UniRule"/>
</dbReference>
<dbReference type="GO" id="GO:0031418">
    <property type="term" value="F:L-ascorbic acid binding"/>
    <property type="evidence" value="ECO:0007669"/>
    <property type="project" value="UniProtKB-KW"/>
</dbReference>
<dbReference type="GO" id="GO:0006974">
    <property type="term" value="P:DNA damage response"/>
    <property type="evidence" value="ECO:0007669"/>
    <property type="project" value="TreeGrafter"/>
</dbReference>
<dbReference type="GO" id="GO:0006879">
    <property type="term" value="P:intracellular iron ion homeostasis"/>
    <property type="evidence" value="ECO:0007669"/>
    <property type="project" value="TreeGrafter"/>
</dbReference>
<dbReference type="Gene3D" id="2.60.120.620">
    <property type="entry name" value="q2cbj1_9rhob like domain"/>
    <property type="match status" value="1"/>
</dbReference>
<dbReference type="Gene3D" id="4.10.860.20">
    <property type="entry name" value="Rabenosyn, Rab binding domain"/>
    <property type="match status" value="1"/>
</dbReference>
<dbReference type="HAMAP" id="MF_00657">
    <property type="entry name" value="Hydroxyl_YbiX"/>
    <property type="match status" value="1"/>
</dbReference>
<dbReference type="InterPro" id="IPR005123">
    <property type="entry name" value="Oxoglu/Fe-dep_dioxygenase_dom"/>
</dbReference>
<dbReference type="InterPro" id="IPR023550">
    <property type="entry name" value="PKHD_hydroxylase"/>
</dbReference>
<dbReference type="InterPro" id="IPR006620">
    <property type="entry name" value="Pro_4_hyd_alph"/>
</dbReference>
<dbReference type="InterPro" id="IPR044862">
    <property type="entry name" value="Pro_4_hyd_alph_FE2OG_OXY"/>
</dbReference>
<dbReference type="NCBIfam" id="NF003974">
    <property type="entry name" value="PRK05467.1-3"/>
    <property type="match status" value="1"/>
</dbReference>
<dbReference type="NCBIfam" id="NF003975">
    <property type="entry name" value="PRK05467.1-4"/>
    <property type="match status" value="1"/>
</dbReference>
<dbReference type="PANTHER" id="PTHR41536">
    <property type="entry name" value="PKHD-TYPE HYDROXYLASE YBIX"/>
    <property type="match status" value="1"/>
</dbReference>
<dbReference type="PANTHER" id="PTHR41536:SF1">
    <property type="entry name" value="PKHD-TYPE HYDROXYLASE YBIX"/>
    <property type="match status" value="1"/>
</dbReference>
<dbReference type="Pfam" id="PF13640">
    <property type="entry name" value="2OG-FeII_Oxy_3"/>
    <property type="match status" value="1"/>
</dbReference>
<dbReference type="SMART" id="SM00702">
    <property type="entry name" value="P4Hc"/>
    <property type="match status" value="1"/>
</dbReference>
<dbReference type="PROSITE" id="PS51471">
    <property type="entry name" value="FE2OG_OXY"/>
    <property type="match status" value="1"/>
</dbReference>
<comment type="cofactor">
    <cofactor evidence="1">
        <name>Fe(2+)</name>
        <dbReference type="ChEBI" id="CHEBI:29033"/>
    </cofactor>
    <text evidence="1">Binds 1 Fe(2+) ion per subunit.</text>
</comment>
<comment type="cofactor">
    <cofactor evidence="1">
        <name>L-ascorbate</name>
        <dbReference type="ChEBI" id="CHEBI:38290"/>
    </cofactor>
</comment>
<keyword id="KW-0223">Dioxygenase</keyword>
<keyword id="KW-0408">Iron</keyword>
<keyword id="KW-0479">Metal-binding</keyword>
<keyword id="KW-0560">Oxidoreductase</keyword>
<keyword id="KW-1185">Reference proteome</keyword>
<keyword id="KW-0847">Vitamin C</keyword>
<name>Y775_PROMT</name>
<feature type="chain" id="PRO_0000346508" description="PKHD-type hydroxylase PMN2A_0775">
    <location>
        <begin position="1"/>
        <end position="221"/>
    </location>
</feature>
<feature type="domain" description="Fe2OG dioxygenase" evidence="1">
    <location>
        <begin position="80"/>
        <end position="174"/>
    </location>
</feature>
<feature type="binding site" evidence="1">
    <location>
        <position position="98"/>
    </location>
    <ligand>
        <name>Fe cation</name>
        <dbReference type="ChEBI" id="CHEBI:24875"/>
    </ligand>
</feature>
<feature type="binding site" evidence="1">
    <location>
        <position position="100"/>
    </location>
    <ligand>
        <name>Fe cation</name>
        <dbReference type="ChEBI" id="CHEBI:24875"/>
    </ligand>
</feature>
<feature type="binding site" evidence="1">
    <location>
        <position position="155"/>
    </location>
    <ligand>
        <name>Fe cation</name>
        <dbReference type="ChEBI" id="CHEBI:24875"/>
    </ligand>
</feature>
<feature type="binding site" evidence="1">
    <location>
        <position position="165"/>
    </location>
    <ligand>
        <name>2-oxoglutarate</name>
        <dbReference type="ChEBI" id="CHEBI:16810"/>
    </ligand>
</feature>
<organism>
    <name type="scientific">Prochlorococcus marinus (strain NATL2A)</name>
    <dbReference type="NCBI Taxonomy" id="59920"/>
    <lineage>
        <taxon>Bacteria</taxon>
        <taxon>Bacillati</taxon>
        <taxon>Cyanobacteriota</taxon>
        <taxon>Cyanophyceae</taxon>
        <taxon>Synechococcales</taxon>
        <taxon>Prochlorococcaceae</taxon>
        <taxon>Prochlorococcus</taxon>
    </lineage>
</organism>
<accession>Q46JR2</accession>
<proteinExistence type="inferred from homology"/>
<evidence type="ECO:0000255" key="1">
    <source>
        <dbReference type="HAMAP-Rule" id="MF_00657"/>
    </source>
</evidence>
<protein>
    <recommendedName>
        <fullName evidence="1">PKHD-type hydroxylase PMN2A_0775</fullName>
        <ecNumber evidence="1">1.14.11.-</ecNumber>
    </recommendedName>
</protein>
<sequence length="221" mass="24745">MEYLTHSLIAKSEARQIVNKLKAEKLSWQDGKKTAGSHASEKKSNFQLDKNSKLSIKLRDIIVNKIISNPLLKSFTLPSLIHGVMFTQSLAGHHYGSHIDNPYMPSGRSDLSFTLFLNAPEDYEGGELCIQTINKTEKIKLSAGEMIIYPSTQLHSVAEVKDGERHVCVGWIQSYVQNNEDRNFLFGLDAGAKGLLAKHGRSDELDLIFQAYSNILRRLGD</sequence>